<gene>
    <name type="primary">alr</name>
    <name type="ordered locus">lpp0804</name>
</gene>
<keyword id="KW-0413">Isomerase</keyword>
<keyword id="KW-0663">Pyridoxal phosphate</keyword>
<comment type="function">
    <text evidence="1">Catalyzes the interconversion of L-alanine and D-alanine. May also act on other amino acids.</text>
</comment>
<comment type="catalytic activity">
    <reaction evidence="1">
        <text>L-alanine = D-alanine</text>
        <dbReference type="Rhea" id="RHEA:20249"/>
        <dbReference type="ChEBI" id="CHEBI:57416"/>
        <dbReference type="ChEBI" id="CHEBI:57972"/>
        <dbReference type="EC" id="5.1.1.1"/>
    </reaction>
</comment>
<comment type="cofactor">
    <cofactor evidence="1">
        <name>pyridoxal 5'-phosphate</name>
        <dbReference type="ChEBI" id="CHEBI:597326"/>
    </cofactor>
</comment>
<comment type="pathway">
    <text evidence="1">Amino-acid biosynthesis; D-alanine biosynthesis; D-alanine from L-alanine: step 1/1.</text>
</comment>
<comment type="similarity">
    <text evidence="1">Belongs to the alanine racemase family.</text>
</comment>
<reference key="1">
    <citation type="journal article" date="2004" name="Nat. Genet.">
        <title>Evidence in the Legionella pneumophila genome for exploitation of host cell functions and high genome plasticity.</title>
        <authorList>
            <person name="Cazalet C."/>
            <person name="Rusniok C."/>
            <person name="Brueggemann H."/>
            <person name="Zidane N."/>
            <person name="Magnier A."/>
            <person name="Ma L."/>
            <person name="Tichit M."/>
            <person name="Jarraud S."/>
            <person name="Bouchier C."/>
            <person name="Vandenesch F."/>
            <person name="Kunst F."/>
            <person name="Etienne J."/>
            <person name="Glaser P."/>
            <person name="Buchrieser C."/>
        </authorList>
    </citation>
    <scope>NUCLEOTIDE SEQUENCE [LARGE SCALE GENOMIC DNA]</scope>
    <source>
        <strain>Paris</strain>
    </source>
</reference>
<sequence>MSRPTRLVIEPSALLHNLSQIKHLAPGKKVIAMVKANAYGCGVREVAPVLDGRIEAFGVACLEEALAIRALGVETPCILFQGVFSSDELSVAVENDFACVLHHAQQLEWLIKTPLPYPIKVWVKVNTGMHRLGFKIHELQKVMGALQTCTWVDKSIGLMTHLACADEPHRPENQQQISLFQEISIPGFRQRSIANSAAIISFPDSQADVVRPGIMLYGVSPFANQNAHDLGLIPVMRFMSAISAIHDNPSFAQVGYGGTWKSDKPSRIGVVAAGYGDGYPRHISEKTPVWVRGREVSIVGRVSMDMLTIDLTEHPDIEIGDEVELWGTHVLVERIAKSAGTVGYELLCQISERVRYK</sequence>
<feature type="chain" id="PRO_1000138608" description="Alanine racemase">
    <location>
        <begin position="1"/>
        <end position="357"/>
    </location>
</feature>
<feature type="active site" description="Proton acceptor; specific for D-alanine" evidence="1">
    <location>
        <position position="35"/>
    </location>
</feature>
<feature type="active site" description="Proton acceptor; specific for L-alanine" evidence="1">
    <location>
        <position position="256"/>
    </location>
</feature>
<feature type="binding site" evidence="1">
    <location>
        <position position="131"/>
    </location>
    <ligand>
        <name>substrate</name>
    </ligand>
</feature>
<feature type="binding site" evidence="1">
    <location>
        <position position="304"/>
    </location>
    <ligand>
        <name>substrate</name>
    </ligand>
</feature>
<feature type="modified residue" description="N6-(pyridoxal phosphate)lysine" evidence="1">
    <location>
        <position position="35"/>
    </location>
</feature>
<dbReference type="EC" id="5.1.1.1" evidence="1"/>
<dbReference type="EMBL" id="CR628336">
    <property type="protein sequence ID" value="CAH11952.1"/>
    <property type="molecule type" value="Genomic_DNA"/>
</dbReference>
<dbReference type="RefSeq" id="WP_010946476.1">
    <property type="nucleotide sequence ID" value="NC_006368.1"/>
</dbReference>
<dbReference type="SMR" id="Q5X709"/>
<dbReference type="GeneID" id="57034731"/>
<dbReference type="KEGG" id="lpp:lpp0804"/>
<dbReference type="LegioList" id="lpp0804"/>
<dbReference type="HOGENOM" id="CLU_028393_1_0_6"/>
<dbReference type="UniPathway" id="UPA00042">
    <property type="reaction ID" value="UER00497"/>
</dbReference>
<dbReference type="GO" id="GO:0005829">
    <property type="term" value="C:cytosol"/>
    <property type="evidence" value="ECO:0007669"/>
    <property type="project" value="TreeGrafter"/>
</dbReference>
<dbReference type="GO" id="GO:0008784">
    <property type="term" value="F:alanine racemase activity"/>
    <property type="evidence" value="ECO:0007669"/>
    <property type="project" value="UniProtKB-UniRule"/>
</dbReference>
<dbReference type="GO" id="GO:0030170">
    <property type="term" value="F:pyridoxal phosphate binding"/>
    <property type="evidence" value="ECO:0007669"/>
    <property type="project" value="UniProtKB-UniRule"/>
</dbReference>
<dbReference type="GO" id="GO:0030632">
    <property type="term" value="P:D-alanine biosynthetic process"/>
    <property type="evidence" value="ECO:0007669"/>
    <property type="project" value="UniProtKB-UniRule"/>
</dbReference>
<dbReference type="CDD" id="cd06827">
    <property type="entry name" value="PLPDE_III_AR_proteobact"/>
    <property type="match status" value="1"/>
</dbReference>
<dbReference type="FunFam" id="3.20.20.10:FF:000002">
    <property type="entry name" value="Alanine racemase"/>
    <property type="match status" value="1"/>
</dbReference>
<dbReference type="Gene3D" id="3.20.20.10">
    <property type="entry name" value="Alanine racemase"/>
    <property type="match status" value="1"/>
</dbReference>
<dbReference type="Gene3D" id="2.40.37.10">
    <property type="entry name" value="Lyase, Ornithine Decarboxylase, Chain A, domain 1"/>
    <property type="match status" value="1"/>
</dbReference>
<dbReference type="HAMAP" id="MF_01201">
    <property type="entry name" value="Ala_racemase"/>
    <property type="match status" value="1"/>
</dbReference>
<dbReference type="InterPro" id="IPR000821">
    <property type="entry name" value="Ala_racemase"/>
</dbReference>
<dbReference type="InterPro" id="IPR009006">
    <property type="entry name" value="Ala_racemase/Decarboxylase_C"/>
</dbReference>
<dbReference type="InterPro" id="IPR011079">
    <property type="entry name" value="Ala_racemase_C"/>
</dbReference>
<dbReference type="InterPro" id="IPR001608">
    <property type="entry name" value="Ala_racemase_N"/>
</dbReference>
<dbReference type="InterPro" id="IPR029066">
    <property type="entry name" value="PLP-binding_barrel"/>
</dbReference>
<dbReference type="NCBIfam" id="TIGR00492">
    <property type="entry name" value="alr"/>
    <property type="match status" value="1"/>
</dbReference>
<dbReference type="PANTHER" id="PTHR30511">
    <property type="entry name" value="ALANINE RACEMASE"/>
    <property type="match status" value="1"/>
</dbReference>
<dbReference type="PANTHER" id="PTHR30511:SF0">
    <property type="entry name" value="ALANINE RACEMASE, CATABOLIC-RELATED"/>
    <property type="match status" value="1"/>
</dbReference>
<dbReference type="Pfam" id="PF00842">
    <property type="entry name" value="Ala_racemase_C"/>
    <property type="match status" value="1"/>
</dbReference>
<dbReference type="Pfam" id="PF01168">
    <property type="entry name" value="Ala_racemase_N"/>
    <property type="match status" value="1"/>
</dbReference>
<dbReference type="PRINTS" id="PR00992">
    <property type="entry name" value="ALARACEMASE"/>
</dbReference>
<dbReference type="SMART" id="SM01005">
    <property type="entry name" value="Ala_racemase_C"/>
    <property type="match status" value="1"/>
</dbReference>
<dbReference type="SUPFAM" id="SSF50621">
    <property type="entry name" value="Alanine racemase C-terminal domain-like"/>
    <property type="match status" value="1"/>
</dbReference>
<dbReference type="SUPFAM" id="SSF51419">
    <property type="entry name" value="PLP-binding barrel"/>
    <property type="match status" value="1"/>
</dbReference>
<protein>
    <recommendedName>
        <fullName evidence="1">Alanine racemase</fullName>
        <ecNumber evidence="1">5.1.1.1</ecNumber>
    </recommendedName>
</protein>
<name>ALR_LEGPA</name>
<proteinExistence type="inferred from homology"/>
<evidence type="ECO:0000255" key="1">
    <source>
        <dbReference type="HAMAP-Rule" id="MF_01201"/>
    </source>
</evidence>
<organism>
    <name type="scientific">Legionella pneumophila (strain Paris)</name>
    <dbReference type="NCBI Taxonomy" id="297246"/>
    <lineage>
        <taxon>Bacteria</taxon>
        <taxon>Pseudomonadati</taxon>
        <taxon>Pseudomonadota</taxon>
        <taxon>Gammaproteobacteria</taxon>
        <taxon>Legionellales</taxon>
        <taxon>Legionellaceae</taxon>
        <taxon>Legionella</taxon>
    </lineage>
</organism>
<accession>Q5X709</accession>